<feature type="chain" id="PRO_1000058703" description="Putative competence-damage inducible protein">
    <location>
        <begin position="1"/>
        <end position="413"/>
    </location>
</feature>
<comment type="similarity">
    <text evidence="1">Belongs to the CinA family.</text>
</comment>
<accession>A3DEA5</accession>
<protein>
    <recommendedName>
        <fullName evidence="1">Putative competence-damage inducible protein</fullName>
    </recommendedName>
</protein>
<organism>
    <name type="scientific">Acetivibrio thermocellus (strain ATCC 27405 / DSM 1237 / JCM 9322 / NBRC 103400 / NCIMB 10682 / NRRL B-4536 / VPI 7372)</name>
    <name type="common">Clostridium thermocellum</name>
    <dbReference type="NCBI Taxonomy" id="203119"/>
    <lineage>
        <taxon>Bacteria</taxon>
        <taxon>Bacillati</taxon>
        <taxon>Bacillota</taxon>
        <taxon>Clostridia</taxon>
        <taxon>Eubacteriales</taxon>
        <taxon>Oscillospiraceae</taxon>
        <taxon>Acetivibrio</taxon>
    </lineage>
</organism>
<keyword id="KW-1185">Reference proteome</keyword>
<gene>
    <name evidence="1" type="primary">cinA</name>
    <name type="ordered locus">Cthe_1052</name>
</gene>
<evidence type="ECO:0000255" key="1">
    <source>
        <dbReference type="HAMAP-Rule" id="MF_00226"/>
    </source>
</evidence>
<proteinExistence type="inferred from homology"/>
<sequence length="413" mass="45330">MNAEILAVGTELLMGQIANTNAQYISKRLNDIGVNVYYHSVVGDNSVRLKKCLLAALERCDLVIMTGGLGPTQDDLTKETVAEVLGKKLVLHEESLERIKTFFTRINRKMTDNNVKQAYLPEGCTVVENNSGTAPGCIIEDKGKIVVMLPGPPPEMMPMLDDTVIPYLAEKSGYRIVSKYLRVFGIGESQLEEMIMDLVDKQDRVTIATYAKDGQVTVRLTTKARTEEEGFREILPLQNEIASRLKEALYSTEDEELEYVAAKMLIDNNITIATAESCTGGLISARLTDVPGISKVFNRGIVSYSNEAKMENLGVKPETLEKYGAVSSRTAMEMAEGVRKIASTDIGLAVTGIAGPDGGTDEKPVGLVYVALAHSLGTEVRELRLAGNRNRIRNLTVLNAFDMVRRYVMKLKG</sequence>
<dbReference type="EMBL" id="CP000568">
    <property type="protein sequence ID" value="ABN52284.1"/>
    <property type="molecule type" value="Genomic_DNA"/>
</dbReference>
<dbReference type="RefSeq" id="WP_004463509.1">
    <property type="nucleotide sequence ID" value="NC_009012.1"/>
</dbReference>
<dbReference type="SMR" id="A3DEA5"/>
<dbReference type="STRING" id="203119.Cthe_1052"/>
<dbReference type="GeneID" id="35803298"/>
<dbReference type="KEGG" id="cth:Cthe_1052"/>
<dbReference type="eggNOG" id="COG1058">
    <property type="taxonomic scope" value="Bacteria"/>
</dbReference>
<dbReference type="eggNOG" id="COG1546">
    <property type="taxonomic scope" value="Bacteria"/>
</dbReference>
<dbReference type="HOGENOM" id="CLU_030805_9_3_9"/>
<dbReference type="OrthoDB" id="9801454at2"/>
<dbReference type="Proteomes" id="UP000002145">
    <property type="component" value="Chromosome"/>
</dbReference>
<dbReference type="CDD" id="cd00885">
    <property type="entry name" value="cinA"/>
    <property type="match status" value="1"/>
</dbReference>
<dbReference type="Gene3D" id="3.30.70.2860">
    <property type="match status" value="1"/>
</dbReference>
<dbReference type="Gene3D" id="3.90.950.20">
    <property type="entry name" value="CinA-like"/>
    <property type="match status" value="1"/>
</dbReference>
<dbReference type="Gene3D" id="3.40.980.10">
    <property type="entry name" value="MoaB/Mog-like domain"/>
    <property type="match status" value="1"/>
</dbReference>
<dbReference type="HAMAP" id="MF_00226_B">
    <property type="entry name" value="CinA_B"/>
    <property type="match status" value="1"/>
</dbReference>
<dbReference type="InterPro" id="IPR050101">
    <property type="entry name" value="CinA"/>
</dbReference>
<dbReference type="InterPro" id="IPR036653">
    <property type="entry name" value="CinA-like_C"/>
</dbReference>
<dbReference type="InterPro" id="IPR008136">
    <property type="entry name" value="CinA_C"/>
</dbReference>
<dbReference type="InterPro" id="IPR041424">
    <property type="entry name" value="CinA_KH"/>
</dbReference>
<dbReference type="InterPro" id="IPR008135">
    <property type="entry name" value="Competence-induced_CinA"/>
</dbReference>
<dbReference type="InterPro" id="IPR036425">
    <property type="entry name" value="MoaB/Mog-like_dom_sf"/>
</dbReference>
<dbReference type="InterPro" id="IPR001453">
    <property type="entry name" value="MoaB/Mog_dom"/>
</dbReference>
<dbReference type="NCBIfam" id="TIGR00200">
    <property type="entry name" value="cinA_nterm"/>
    <property type="match status" value="1"/>
</dbReference>
<dbReference type="NCBIfam" id="TIGR00177">
    <property type="entry name" value="molyb_syn"/>
    <property type="match status" value="1"/>
</dbReference>
<dbReference type="NCBIfam" id="TIGR00199">
    <property type="entry name" value="PncC_domain"/>
    <property type="match status" value="1"/>
</dbReference>
<dbReference type="NCBIfam" id="NF001813">
    <property type="entry name" value="PRK00549.1"/>
    <property type="match status" value="1"/>
</dbReference>
<dbReference type="PANTHER" id="PTHR13939">
    <property type="entry name" value="NICOTINAMIDE-NUCLEOTIDE AMIDOHYDROLASE PNCC"/>
    <property type="match status" value="1"/>
</dbReference>
<dbReference type="PANTHER" id="PTHR13939:SF0">
    <property type="entry name" value="NMN AMIDOHYDROLASE-LIKE PROTEIN YFAY"/>
    <property type="match status" value="1"/>
</dbReference>
<dbReference type="Pfam" id="PF02464">
    <property type="entry name" value="CinA"/>
    <property type="match status" value="1"/>
</dbReference>
<dbReference type="Pfam" id="PF18146">
    <property type="entry name" value="CinA_KH"/>
    <property type="match status" value="1"/>
</dbReference>
<dbReference type="Pfam" id="PF00994">
    <property type="entry name" value="MoCF_biosynth"/>
    <property type="match status" value="1"/>
</dbReference>
<dbReference type="PIRSF" id="PIRSF006728">
    <property type="entry name" value="CinA"/>
    <property type="match status" value="1"/>
</dbReference>
<dbReference type="SMART" id="SM00852">
    <property type="entry name" value="MoCF_biosynth"/>
    <property type="match status" value="1"/>
</dbReference>
<dbReference type="SUPFAM" id="SSF142433">
    <property type="entry name" value="CinA-like"/>
    <property type="match status" value="1"/>
</dbReference>
<dbReference type="SUPFAM" id="SSF53218">
    <property type="entry name" value="Molybdenum cofactor biosynthesis proteins"/>
    <property type="match status" value="1"/>
</dbReference>
<name>CINA_ACET2</name>
<reference key="1">
    <citation type="submission" date="2007-02" db="EMBL/GenBank/DDBJ databases">
        <title>Complete sequence of Clostridium thermocellum ATCC 27405.</title>
        <authorList>
            <consortium name="US DOE Joint Genome Institute"/>
            <person name="Copeland A."/>
            <person name="Lucas S."/>
            <person name="Lapidus A."/>
            <person name="Barry K."/>
            <person name="Detter J.C."/>
            <person name="Glavina del Rio T."/>
            <person name="Hammon N."/>
            <person name="Israni S."/>
            <person name="Dalin E."/>
            <person name="Tice H."/>
            <person name="Pitluck S."/>
            <person name="Chertkov O."/>
            <person name="Brettin T."/>
            <person name="Bruce D."/>
            <person name="Han C."/>
            <person name="Tapia R."/>
            <person name="Gilna P."/>
            <person name="Schmutz J."/>
            <person name="Larimer F."/>
            <person name="Land M."/>
            <person name="Hauser L."/>
            <person name="Kyrpides N."/>
            <person name="Mikhailova N."/>
            <person name="Wu J.H.D."/>
            <person name="Newcomb M."/>
            <person name="Richardson P."/>
        </authorList>
    </citation>
    <scope>NUCLEOTIDE SEQUENCE [LARGE SCALE GENOMIC DNA]</scope>
    <source>
        <strain>ATCC 27405 / DSM 1237 / JCM 9322 / NBRC 103400 / NCIMB 10682 / NRRL B-4536 / VPI 7372</strain>
    </source>
</reference>